<reference key="1">
    <citation type="journal article" date="2005" name="J. Mammal.">
        <title>Review of the philippine genera Chrotomys and Celaenomys (Murinae) and description of a new species.</title>
        <authorList>
            <person name="Rickart E.A."/>
            <person name="Heaney L.R."/>
            <person name="Goodman S.M."/>
            <person name="Jansa S."/>
        </authorList>
    </citation>
    <scope>NUCLEOTIDE SEQUENCE [GENOMIC DNA]</scope>
</reference>
<sequence length="381" mass="43216">MTNIRKTHPLIKIINHSFIDLPAPSNISSWWNFGSLLGLCLMIQILTGLFLAMHYTSDTTTAFSSVTHICRDVNYGWLIRYMHANGASMFFICLFLHVGRGMYYGSYTFMETWNIGVILLFTVMATAFMGYVLPWGQMSFWGATVITNLLSAIPYIGTTLVEWIWGGFSVDKATLTRFFAFHFILPFIITALVIVHLLFLHETGSNNPTGLNSDADKIPFHPYYTIKDLLGVLILMLSLMILVLFFPDLLSDPDNYMPANPLNTPPHIKPEWYFLFAYAILRSIPNKLGGVLALIMSILILAFLPFLHTSKQRSMIFRPITQMLYWVLVANLLVLTWIGGQPVEHPFIIIGQLASISYFSIILILMPVSGIIEDKLLKWSL</sequence>
<name>CYB_CHRSI</name>
<dbReference type="EMBL" id="AY687859">
    <property type="protein sequence ID" value="AAU21042.1"/>
    <property type="molecule type" value="Genomic_DNA"/>
</dbReference>
<dbReference type="SMR" id="Q64GJ1"/>
<dbReference type="GO" id="GO:0005743">
    <property type="term" value="C:mitochondrial inner membrane"/>
    <property type="evidence" value="ECO:0007669"/>
    <property type="project" value="UniProtKB-SubCell"/>
</dbReference>
<dbReference type="GO" id="GO:0045275">
    <property type="term" value="C:respiratory chain complex III"/>
    <property type="evidence" value="ECO:0007669"/>
    <property type="project" value="InterPro"/>
</dbReference>
<dbReference type="GO" id="GO:0046872">
    <property type="term" value="F:metal ion binding"/>
    <property type="evidence" value="ECO:0007669"/>
    <property type="project" value="UniProtKB-KW"/>
</dbReference>
<dbReference type="GO" id="GO:0008121">
    <property type="term" value="F:ubiquinol-cytochrome-c reductase activity"/>
    <property type="evidence" value="ECO:0007669"/>
    <property type="project" value="InterPro"/>
</dbReference>
<dbReference type="GO" id="GO:0006122">
    <property type="term" value="P:mitochondrial electron transport, ubiquinol to cytochrome c"/>
    <property type="evidence" value="ECO:0007669"/>
    <property type="project" value="TreeGrafter"/>
</dbReference>
<dbReference type="CDD" id="cd00290">
    <property type="entry name" value="cytochrome_b_C"/>
    <property type="match status" value="1"/>
</dbReference>
<dbReference type="CDD" id="cd00284">
    <property type="entry name" value="Cytochrome_b_N"/>
    <property type="match status" value="1"/>
</dbReference>
<dbReference type="FunFam" id="1.20.810.10:FF:000002">
    <property type="entry name" value="Cytochrome b"/>
    <property type="match status" value="1"/>
</dbReference>
<dbReference type="Gene3D" id="1.20.810.10">
    <property type="entry name" value="Cytochrome Bc1 Complex, Chain C"/>
    <property type="match status" value="1"/>
</dbReference>
<dbReference type="InterPro" id="IPR005798">
    <property type="entry name" value="Cyt_b/b6_C"/>
</dbReference>
<dbReference type="InterPro" id="IPR036150">
    <property type="entry name" value="Cyt_b/b6_C_sf"/>
</dbReference>
<dbReference type="InterPro" id="IPR005797">
    <property type="entry name" value="Cyt_b/b6_N"/>
</dbReference>
<dbReference type="InterPro" id="IPR027387">
    <property type="entry name" value="Cytb/b6-like_sf"/>
</dbReference>
<dbReference type="InterPro" id="IPR030689">
    <property type="entry name" value="Cytochrome_b"/>
</dbReference>
<dbReference type="InterPro" id="IPR048260">
    <property type="entry name" value="Cytochrome_b_C_euk/bac"/>
</dbReference>
<dbReference type="InterPro" id="IPR048259">
    <property type="entry name" value="Cytochrome_b_N_euk/bac"/>
</dbReference>
<dbReference type="InterPro" id="IPR016174">
    <property type="entry name" value="Di-haem_cyt_TM"/>
</dbReference>
<dbReference type="PANTHER" id="PTHR19271">
    <property type="entry name" value="CYTOCHROME B"/>
    <property type="match status" value="1"/>
</dbReference>
<dbReference type="PANTHER" id="PTHR19271:SF16">
    <property type="entry name" value="CYTOCHROME B"/>
    <property type="match status" value="1"/>
</dbReference>
<dbReference type="Pfam" id="PF00032">
    <property type="entry name" value="Cytochrom_B_C"/>
    <property type="match status" value="1"/>
</dbReference>
<dbReference type="Pfam" id="PF00033">
    <property type="entry name" value="Cytochrome_B"/>
    <property type="match status" value="1"/>
</dbReference>
<dbReference type="PIRSF" id="PIRSF038885">
    <property type="entry name" value="COB"/>
    <property type="match status" value="1"/>
</dbReference>
<dbReference type="SUPFAM" id="SSF81648">
    <property type="entry name" value="a domain/subunit of cytochrome bc1 complex (Ubiquinol-cytochrome c reductase)"/>
    <property type="match status" value="1"/>
</dbReference>
<dbReference type="SUPFAM" id="SSF81342">
    <property type="entry name" value="Transmembrane di-heme cytochromes"/>
    <property type="match status" value="1"/>
</dbReference>
<dbReference type="PROSITE" id="PS51003">
    <property type="entry name" value="CYTB_CTER"/>
    <property type="match status" value="1"/>
</dbReference>
<dbReference type="PROSITE" id="PS51002">
    <property type="entry name" value="CYTB_NTER"/>
    <property type="match status" value="1"/>
</dbReference>
<evidence type="ECO:0000250" key="1"/>
<evidence type="ECO:0000250" key="2">
    <source>
        <dbReference type="UniProtKB" id="P00157"/>
    </source>
</evidence>
<evidence type="ECO:0000255" key="3">
    <source>
        <dbReference type="PROSITE-ProRule" id="PRU00967"/>
    </source>
</evidence>
<evidence type="ECO:0000255" key="4">
    <source>
        <dbReference type="PROSITE-ProRule" id="PRU00968"/>
    </source>
</evidence>
<protein>
    <recommendedName>
        <fullName>Cytochrome b</fullName>
    </recommendedName>
    <alternativeName>
        <fullName>Complex III subunit 3</fullName>
    </alternativeName>
    <alternativeName>
        <fullName>Complex III subunit III</fullName>
    </alternativeName>
    <alternativeName>
        <fullName>Cytochrome b-c1 complex subunit 3</fullName>
    </alternativeName>
    <alternativeName>
        <fullName>Ubiquinol-cytochrome-c reductase complex cytochrome b subunit</fullName>
    </alternativeName>
</protein>
<accession>Q64GJ1</accession>
<keyword id="KW-0249">Electron transport</keyword>
<keyword id="KW-0349">Heme</keyword>
<keyword id="KW-0408">Iron</keyword>
<keyword id="KW-0472">Membrane</keyword>
<keyword id="KW-0479">Metal-binding</keyword>
<keyword id="KW-0496">Mitochondrion</keyword>
<keyword id="KW-0999">Mitochondrion inner membrane</keyword>
<keyword id="KW-0679">Respiratory chain</keyword>
<keyword id="KW-0812">Transmembrane</keyword>
<keyword id="KW-1133">Transmembrane helix</keyword>
<keyword id="KW-0813">Transport</keyword>
<keyword id="KW-0830">Ubiquinone</keyword>
<organism>
    <name type="scientific">Chrotomys silaceus</name>
    <name type="common">Silver earth rat</name>
    <dbReference type="NCBI Taxonomy" id="290248"/>
    <lineage>
        <taxon>Eukaryota</taxon>
        <taxon>Metazoa</taxon>
        <taxon>Chordata</taxon>
        <taxon>Craniata</taxon>
        <taxon>Vertebrata</taxon>
        <taxon>Euteleostomi</taxon>
        <taxon>Mammalia</taxon>
        <taxon>Eutheria</taxon>
        <taxon>Euarchontoglires</taxon>
        <taxon>Glires</taxon>
        <taxon>Rodentia</taxon>
        <taxon>Myomorpha</taxon>
        <taxon>Muroidea</taxon>
        <taxon>Muridae</taxon>
        <taxon>Murinae</taxon>
        <taxon>Chrotomys</taxon>
    </lineage>
</organism>
<feature type="chain" id="PRO_0000255008" description="Cytochrome b">
    <location>
        <begin position="1"/>
        <end position="381"/>
    </location>
</feature>
<feature type="transmembrane region" description="Helical" evidence="2">
    <location>
        <begin position="33"/>
        <end position="53"/>
    </location>
</feature>
<feature type="transmembrane region" description="Helical" evidence="2">
    <location>
        <begin position="77"/>
        <end position="98"/>
    </location>
</feature>
<feature type="transmembrane region" description="Helical" evidence="2">
    <location>
        <begin position="113"/>
        <end position="133"/>
    </location>
</feature>
<feature type="transmembrane region" description="Helical" evidence="2">
    <location>
        <begin position="178"/>
        <end position="198"/>
    </location>
</feature>
<feature type="transmembrane region" description="Helical" evidence="2">
    <location>
        <begin position="226"/>
        <end position="246"/>
    </location>
</feature>
<feature type="transmembrane region" description="Helical" evidence="2">
    <location>
        <begin position="288"/>
        <end position="308"/>
    </location>
</feature>
<feature type="transmembrane region" description="Helical" evidence="2">
    <location>
        <begin position="320"/>
        <end position="340"/>
    </location>
</feature>
<feature type="transmembrane region" description="Helical" evidence="2">
    <location>
        <begin position="347"/>
        <end position="367"/>
    </location>
</feature>
<feature type="binding site" description="axial binding residue" evidence="2">
    <location>
        <position position="83"/>
    </location>
    <ligand>
        <name>heme b</name>
        <dbReference type="ChEBI" id="CHEBI:60344"/>
        <label>b562</label>
    </ligand>
    <ligandPart>
        <name>Fe</name>
        <dbReference type="ChEBI" id="CHEBI:18248"/>
    </ligandPart>
</feature>
<feature type="binding site" description="axial binding residue" evidence="2">
    <location>
        <position position="97"/>
    </location>
    <ligand>
        <name>heme b</name>
        <dbReference type="ChEBI" id="CHEBI:60344"/>
        <label>b566</label>
    </ligand>
    <ligandPart>
        <name>Fe</name>
        <dbReference type="ChEBI" id="CHEBI:18248"/>
    </ligandPart>
</feature>
<feature type="binding site" description="axial binding residue" evidence="2">
    <location>
        <position position="182"/>
    </location>
    <ligand>
        <name>heme b</name>
        <dbReference type="ChEBI" id="CHEBI:60344"/>
        <label>b562</label>
    </ligand>
    <ligandPart>
        <name>Fe</name>
        <dbReference type="ChEBI" id="CHEBI:18248"/>
    </ligandPart>
</feature>
<feature type="binding site" description="axial binding residue" evidence="2">
    <location>
        <position position="196"/>
    </location>
    <ligand>
        <name>heme b</name>
        <dbReference type="ChEBI" id="CHEBI:60344"/>
        <label>b566</label>
    </ligand>
    <ligandPart>
        <name>Fe</name>
        <dbReference type="ChEBI" id="CHEBI:18248"/>
    </ligandPart>
</feature>
<feature type="binding site" evidence="2">
    <location>
        <position position="201"/>
    </location>
    <ligand>
        <name>a ubiquinone</name>
        <dbReference type="ChEBI" id="CHEBI:16389"/>
    </ligand>
</feature>
<proteinExistence type="inferred from homology"/>
<comment type="function">
    <text evidence="2">Component of the ubiquinol-cytochrome c reductase complex (complex III or cytochrome b-c1 complex) that is part of the mitochondrial respiratory chain. The b-c1 complex mediates electron transfer from ubiquinol to cytochrome c. Contributes to the generation of a proton gradient across the mitochondrial membrane that is then used for ATP synthesis.</text>
</comment>
<comment type="cofactor">
    <cofactor evidence="2">
        <name>heme b</name>
        <dbReference type="ChEBI" id="CHEBI:60344"/>
    </cofactor>
    <text evidence="2">Binds 2 heme b groups non-covalently.</text>
</comment>
<comment type="subunit">
    <text evidence="2">The cytochrome bc1 complex contains 11 subunits: 3 respiratory subunits (MT-CYB, CYC1 and UQCRFS1), 2 core proteins (UQCRC1 and UQCRC2) and 6 low-molecular weight proteins (UQCRH/QCR6, UQCRB/QCR7, UQCRQ/QCR8, UQCR10/QCR9, UQCR11/QCR10 and a cleavage product of UQCRFS1). This cytochrome bc1 complex then forms a dimer.</text>
</comment>
<comment type="subcellular location">
    <subcellularLocation>
        <location evidence="2">Mitochondrion inner membrane</location>
        <topology evidence="2">Multi-pass membrane protein</topology>
    </subcellularLocation>
</comment>
<comment type="miscellaneous">
    <text evidence="1">Heme 1 (or BL or b562) is low-potential and absorbs at about 562 nm, and heme 2 (or BH or b566) is high-potential and absorbs at about 566 nm.</text>
</comment>
<comment type="similarity">
    <text evidence="3 4">Belongs to the cytochrome b family.</text>
</comment>
<comment type="caution">
    <text evidence="2">The full-length protein contains only eight transmembrane helices, not nine as predicted by bioinformatics tools.</text>
</comment>
<gene>
    <name type="primary">MT-CYB</name>
    <name type="synonym">COB</name>
    <name type="synonym">CYTB</name>
    <name type="synonym">MTCYB</name>
</gene>
<geneLocation type="mitochondrion"/>